<proteinExistence type="inferred from homology"/>
<dbReference type="EMBL" id="AF137379">
    <property type="protein sequence ID" value="AAD54815.1"/>
    <property type="molecule type" value="Genomic_DNA"/>
</dbReference>
<dbReference type="RefSeq" id="NP_050844.1">
    <property type="nucleotide sequence ID" value="NC_000927.1"/>
</dbReference>
<dbReference type="SMR" id="Q9TL01"/>
<dbReference type="GeneID" id="801948"/>
<dbReference type="GO" id="GO:0009535">
    <property type="term" value="C:chloroplast thylakoid membrane"/>
    <property type="evidence" value="ECO:0007669"/>
    <property type="project" value="UniProtKB-SubCell"/>
</dbReference>
<dbReference type="GO" id="GO:0009512">
    <property type="term" value="C:cytochrome b6f complex"/>
    <property type="evidence" value="ECO:0007669"/>
    <property type="project" value="InterPro"/>
</dbReference>
<dbReference type="GO" id="GO:0045158">
    <property type="term" value="F:electron transporter, transferring electrons within cytochrome b6/f complex of photosystem II activity"/>
    <property type="evidence" value="ECO:0007669"/>
    <property type="project" value="InterPro"/>
</dbReference>
<dbReference type="GO" id="GO:0017004">
    <property type="term" value="P:cytochrome complex assembly"/>
    <property type="evidence" value="ECO:0007669"/>
    <property type="project" value="UniProtKB-UniRule"/>
</dbReference>
<dbReference type="GO" id="GO:0015979">
    <property type="term" value="P:photosynthesis"/>
    <property type="evidence" value="ECO:0007669"/>
    <property type="project" value="UniProtKB-KW"/>
</dbReference>
<dbReference type="HAMAP" id="MF_00395">
    <property type="entry name" value="Cytb6_f_PetN"/>
    <property type="match status" value="1"/>
</dbReference>
<dbReference type="InterPro" id="IPR036143">
    <property type="entry name" value="Cytochr_b6-f_cplx_su8_sf"/>
</dbReference>
<dbReference type="InterPro" id="IPR005497">
    <property type="entry name" value="Cytochrome_b6-f_cplx_su8"/>
</dbReference>
<dbReference type="Pfam" id="PF03742">
    <property type="entry name" value="PetN"/>
    <property type="match status" value="1"/>
</dbReference>
<dbReference type="SUPFAM" id="SSF103451">
    <property type="entry name" value="PetN subunit of the cytochrome b6f complex"/>
    <property type="match status" value="1"/>
</dbReference>
<evidence type="ECO:0000250" key="1"/>
<evidence type="ECO:0000255" key="2"/>
<evidence type="ECO:0000305" key="3"/>
<protein>
    <recommendedName>
        <fullName>Cytochrome b6-f complex subunit 8</fullName>
    </recommendedName>
    <alternativeName>
        <fullName>Cytochrome b6-f complex subunit PetN</fullName>
    </alternativeName>
    <alternativeName>
        <fullName>Cytochrome b6-f complex subunit VIII</fullName>
    </alternativeName>
</protein>
<name>PETN_NEPOL</name>
<accession>Q9TL01</accession>
<geneLocation type="chloroplast"/>
<feature type="chain" id="PRO_0000217116" description="Cytochrome b6-f complex subunit 8">
    <location>
        <begin position="1"/>
        <end position="30"/>
    </location>
</feature>
<feature type="transmembrane region" description="Helical" evidence="2">
    <location>
        <begin position="4"/>
        <end position="24"/>
    </location>
</feature>
<comment type="function">
    <text evidence="1">Component of the cytochrome b6-f complex, which mediates electron transfer between photosystem II (PSII) and photosystem I (PSI), cyclic electron flow around PSI, and state transitions.</text>
</comment>
<comment type="subunit">
    <text evidence="1">The 4 large subunits of the cytochrome b6-f complex are cytochrome b6, subunit IV (17 kDa polypeptide, PetD), cytochrome f and the Rieske protein, while the 4 small subunits are PetG, PetL, PetM and PetN. The complex functions as a dimer (By similarity).</text>
</comment>
<comment type="subcellular location">
    <subcellularLocation>
        <location evidence="1">Plastid</location>
        <location evidence="1">Chloroplast thylakoid membrane</location>
        <topology evidence="1">Single-pass membrane protein</topology>
    </subcellularLocation>
</comment>
<comment type="similarity">
    <text evidence="3">Belongs to the PetN family.</text>
</comment>
<gene>
    <name type="primary">petN</name>
    <name type="synonym">ycf6</name>
</gene>
<reference key="1">
    <citation type="journal article" date="1999" name="Proc. Natl. Acad. Sci. U.S.A.">
        <title>The complete chloroplast DNA sequence of the green alga Nephroselmis olivacea: insights into the architecture of ancestral chloroplast genomes.</title>
        <authorList>
            <person name="Turmel M."/>
            <person name="Otis C."/>
            <person name="Lemieux C."/>
        </authorList>
    </citation>
    <scope>NUCLEOTIDE SEQUENCE [LARGE SCALE GENOMIC DNA]</scope>
    <source>
        <strain>NIES-484 / S-N-5-8</strain>
    </source>
</reference>
<sequence>MADIVSAGWAFLMVSFTFSLSLVVWGRSGL</sequence>
<keyword id="KW-0150">Chloroplast</keyword>
<keyword id="KW-0249">Electron transport</keyword>
<keyword id="KW-0472">Membrane</keyword>
<keyword id="KW-0602">Photosynthesis</keyword>
<keyword id="KW-0934">Plastid</keyword>
<keyword id="KW-0793">Thylakoid</keyword>
<keyword id="KW-0812">Transmembrane</keyword>
<keyword id="KW-1133">Transmembrane helix</keyword>
<keyword id="KW-0813">Transport</keyword>
<organism>
    <name type="scientific">Nephroselmis olivacea</name>
    <name type="common">Green alga</name>
    <dbReference type="NCBI Taxonomy" id="31312"/>
    <lineage>
        <taxon>Eukaryota</taxon>
        <taxon>Viridiplantae</taxon>
        <taxon>Chlorophyta</taxon>
        <taxon>Nephroselmidophyceae</taxon>
        <taxon>Nephroselmidales</taxon>
        <taxon>Nephroselmidaceae</taxon>
        <taxon>Nephroselmis</taxon>
    </lineage>
</organism>